<keyword id="KW-0251">Elongation factor</keyword>
<keyword id="KW-0648">Protein biosynthesis</keyword>
<gene>
    <name evidence="1" type="primary">ef1b</name>
    <name type="ordered locus">Tneu_1982</name>
</gene>
<organism>
    <name type="scientific">Pyrobaculum neutrophilum (strain DSM 2338 / JCM 9278 / NBRC 100436 / V24Sta)</name>
    <name type="common">Thermoproteus neutrophilus</name>
    <dbReference type="NCBI Taxonomy" id="444157"/>
    <lineage>
        <taxon>Archaea</taxon>
        <taxon>Thermoproteota</taxon>
        <taxon>Thermoprotei</taxon>
        <taxon>Thermoproteales</taxon>
        <taxon>Thermoproteaceae</taxon>
        <taxon>Pyrobaculum</taxon>
    </lineage>
</organism>
<feature type="chain" id="PRO_0000366442" description="Elongation factor 1-beta">
    <location>
        <begin position="1"/>
        <end position="92"/>
    </location>
</feature>
<accession>B1YC43</accession>
<proteinExistence type="inferred from homology"/>
<name>EF1B_PYRNV</name>
<dbReference type="EMBL" id="CP001014">
    <property type="protein sequence ID" value="ACB40897.1"/>
    <property type="molecule type" value="Genomic_DNA"/>
</dbReference>
<dbReference type="RefSeq" id="WP_012351316.1">
    <property type="nucleotide sequence ID" value="NC_010525.1"/>
</dbReference>
<dbReference type="SMR" id="B1YC43"/>
<dbReference type="STRING" id="444157.Tneu_1982"/>
<dbReference type="GeneID" id="6165557"/>
<dbReference type="KEGG" id="tne:Tneu_1982"/>
<dbReference type="eggNOG" id="arCOG01988">
    <property type="taxonomic scope" value="Archaea"/>
</dbReference>
<dbReference type="HOGENOM" id="CLU_165896_1_0_2"/>
<dbReference type="OrthoDB" id="84643at2157"/>
<dbReference type="Proteomes" id="UP000001694">
    <property type="component" value="Chromosome"/>
</dbReference>
<dbReference type="GO" id="GO:0003746">
    <property type="term" value="F:translation elongation factor activity"/>
    <property type="evidence" value="ECO:0007669"/>
    <property type="project" value="UniProtKB-UniRule"/>
</dbReference>
<dbReference type="CDD" id="cd00292">
    <property type="entry name" value="EF1B"/>
    <property type="match status" value="1"/>
</dbReference>
<dbReference type="Gene3D" id="3.30.70.60">
    <property type="match status" value="1"/>
</dbReference>
<dbReference type="HAMAP" id="MF_00043">
    <property type="entry name" value="EF1_beta"/>
    <property type="match status" value="1"/>
</dbReference>
<dbReference type="InterPro" id="IPR036219">
    <property type="entry name" value="eEF-1beta-like_sf"/>
</dbReference>
<dbReference type="InterPro" id="IPR014038">
    <property type="entry name" value="EF1B_bsu/dsu_GNE"/>
</dbReference>
<dbReference type="InterPro" id="IPR014717">
    <property type="entry name" value="Transl_elong_EF1B/ribsomal_bS6"/>
</dbReference>
<dbReference type="InterPro" id="IPR004542">
    <property type="entry name" value="Transl_elong_EF1B_B_arc"/>
</dbReference>
<dbReference type="NCBIfam" id="NF001670">
    <property type="entry name" value="PRK00435.1"/>
    <property type="match status" value="1"/>
</dbReference>
<dbReference type="PANTHER" id="PTHR39647">
    <property type="entry name" value="ELONGATION FACTOR 1-BETA"/>
    <property type="match status" value="1"/>
</dbReference>
<dbReference type="PANTHER" id="PTHR39647:SF1">
    <property type="entry name" value="ELONGATION FACTOR 1-BETA"/>
    <property type="match status" value="1"/>
</dbReference>
<dbReference type="Pfam" id="PF00736">
    <property type="entry name" value="EF1_GNE"/>
    <property type="match status" value="1"/>
</dbReference>
<dbReference type="PIRSF" id="PIRSF006521">
    <property type="entry name" value="Transl_elong_EF1B_B_arc"/>
    <property type="match status" value="1"/>
</dbReference>
<dbReference type="SMART" id="SM00888">
    <property type="entry name" value="EF1_GNE"/>
    <property type="match status" value="1"/>
</dbReference>
<dbReference type="SUPFAM" id="SSF54984">
    <property type="entry name" value="eEF-1beta-like"/>
    <property type="match status" value="1"/>
</dbReference>
<evidence type="ECO:0000255" key="1">
    <source>
        <dbReference type="HAMAP-Rule" id="MF_00043"/>
    </source>
</evidence>
<reference key="1">
    <citation type="submission" date="2008-03" db="EMBL/GenBank/DDBJ databases">
        <title>Complete sequence of Thermoproteus neutrophilus V24Sta.</title>
        <authorList>
            <consortium name="US DOE Joint Genome Institute"/>
            <person name="Copeland A."/>
            <person name="Lucas S."/>
            <person name="Lapidus A."/>
            <person name="Glavina del Rio T."/>
            <person name="Dalin E."/>
            <person name="Tice H."/>
            <person name="Bruce D."/>
            <person name="Goodwin L."/>
            <person name="Pitluck S."/>
            <person name="Sims D."/>
            <person name="Brettin T."/>
            <person name="Detter J.C."/>
            <person name="Han C."/>
            <person name="Kuske C.R."/>
            <person name="Schmutz J."/>
            <person name="Larimer F."/>
            <person name="Land M."/>
            <person name="Hauser L."/>
            <person name="Kyrpides N."/>
            <person name="Mikhailova N."/>
            <person name="Biddle J.F."/>
            <person name="Zhang Z."/>
            <person name="Fitz-Gibbon S.T."/>
            <person name="Lowe T.M."/>
            <person name="Saltikov C."/>
            <person name="House C.H."/>
            <person name="Richardson P."/>
        </authorList>
    </citation>
    <scope>NUCLEOTIDE SEQUENCE [LARGE SCALE GENOMIC DNA]</scope>
    <source>
        <strain>DSM 2338 / JCM 9278 / NBRC 100436 / V24Sta</strain>
    </source>
</reference>
<protein>
    <recommendedName>
        <fullName evidence="1">Elongation factor 1-beta</fullName>
        <shortName evidence="1">EF-1-beta</shortName>
    </recommendedName>
    <alternativeName>
        <fullName evidence="1">aEF-1beta</fullName>
    </alternativeName>
</protein>
<comment type="function">
    <text evidence="1">Promotes the exchange of GDP for GTP in EF-1-alpha/GDP, thus allowing the regeneration of EF-1-alpha/GTP that could then be used to form the ternary complex EF-1-alpha/GTP/AAtRNA.</text>
</comment>
<comment type="similarity">
    <text evidence="1">Belongs to the EF-1-beta/EF-1-delta family.</text>
</comment>
<sequence length="92" mass="10585">MSAEVALVYRVLPESVEVDIEKLKTSVINKLSPKYKVDRVEVEEIGFGIKALRFFIRMPESDEYSSDEVEELLRSVEGVGGYELEYFSRLSF</sequence>